<name>RL6_ARCFU</name>
<comment type="function">
    <text evidence="1">This protein binds to the 23S rRNA, and is important in its secondary structure. It is located near the subunit interface in the base of the L7/L12 stalk, and near the tRNA binding site of the peptidyltransferase center.</text>
</comment>
<comment type="subunit">
    <text evidence="1">Part of the 50S ribosomal subunit.</text>
</comment>
<comment type="similarity">
    <text evidence="1">Belongs to the universal ribosomal protein uL6 family.</text>
</comment>
<feature type="chain" id="PRO_0000131082" description="Large ribosomal subunit protein uL6">
    <location>
        <begin position="1"/>
        <end position="196"/>
    </location>
</feature>
<accession>O28370</accession>
<reference key="1">
    <citation type="journal article" date="1997" name="Nature">
        <title>The complete genome sequence of the hyperthermophilic, sulphate-reducing archaeon Archaeoglobus fulgidus.</title>
        <authorList>
            <person name="Klenk H.-P."/>
            <person name="Clayton R.A."/>
            <person name="Tomb J.-F."/>
            <person name="White O."/>
            <person name="Nelson K.E."/>
            <person name="Ketchum K.A."/>
            <person name="Dodson R.J."/>
            <person name="Gwinn M.L."/>
            <person name="Hickey E.K."/>
            <person name="Peterson J.D."/>
            <person name="Richardson D.L."/>
            <person name="Kerlavage A.R."/>
            <person name="Graham D.E."/>
            <person name="Kyrpides N.C."/>
            <person name="Fleischmann R.D."/>
            <person name="Quackenbush J."/>
            <person name="Lee N.H."/>
            <person name="Sutton G.G."/>
            <person name="Gill S.R."/>
            <person name="Kirkness E.F."/>
            <person name="Dougherty B.A."/>
            <person name="McKenney K."/>
            <person name="Adams M.D."/>
            <person name="Loftus B.J."/>
            <person name="Peterson S.N."/>
            <person name="Reich C.I."/>
            <person name="McNeil L.K."/>
            <person name="Badger J.H."/>
            <person name="Glodek A."/>
            <person name="Zhou L."/>
            <person name="Overbeek R."/>
            <person name="Gocayne J.D."/>
            <person name="Weidman J.F."/>
            <person name="McDonald L.A."/>
            <person name="Utterback T.R."/>
            <person name="Cotton M.D."/>
            <person name="Spriggs T."/>
            <person name="Artiach P."/>
            <person name="Kaine B.P."/>
            <person name="Sykes S.M."/>
            <person name="Sadow P.W."/>
            <person name="D'Andrea K.P."/>
            <person name="Bowman C."/>
            <person name="Fujii C."/>
            <person name="Garland S.A."/>
            <person name="Mason T.M."/>
            <person name="Olsen G.J."/>
            <person name="Fraser C.M."/>
            <person name="Smith H.O."/>
            <person name="Woese C.R."/>
            <person name="Venter J.C."/>
        </authorList>
    </citation>
    <scope>NUCLEOTIDE SEQUENCE [LARGE SCALE GENOMIC DNA]</scope>
    <source>
        <strain>ATCC 49558 / DSM 4304 / JCM 9628 / NBRC 100126 / VC-16</strain>
    </source>
</reference>
<gene>
    <name evidence="1" type="primary">rpl6</name>
    <name type="ordered locus">AF_1909</name>
</gene>
<keyword id="KW-1185">Reference proteome</keyword>
<keyword id="KW-0687">Ribonucleoprotein</keyword>
<keyword id="KW-0689">Ribosomal protein</keyword>
<keyword id="KW-0694">RNA-binding</keyword>
<keyword id="KW-0699">rRNA-binding</keyword>
<dbReference type="EMBL" id="AE000782">
    <property type="protein sequence ID" value="AAB89355.1"/>
    <property type="molecule type" value="Genomic_DNA"/>
</dbReference>
<dbReference type="PIR" id="D69488">
    <property type="entry name" value="D69488"/>
</dbReference>
<dbReference type="SMR" id="O28370"/>
<dbReference type="STRING" id="224325.AF_1909"/>
<dbReference type="PaxDb" id="224325-AF_1909"/>
<dbReference type="EnsemblBacteria" id="AAB89355">
    <property type="protein sequence ID" value="AAB89355"/>
    <property type="gene ID" value="AF_1909"/>
</dbReference>
<dbReference type="KEGG" id="afu:AF_1909"/>
<dbReference type="eggNOG" id="arCOG04090">
    <property type="taxonomic scope" value="Archaea"/>
</dbReference>
<dbReference type="HOGENOM" id="CLU_065464_0_0_2"/>
<dbReference type="OrthoDB" id="7144at2157"/>
<dbReference type="PhylomeDB" id="O28370"/>
<dbReference type="Proteomes" id="UP000002199">
    <property type="component" value="Chromosome"/>
</dbReference>
<dbReference type="GO" id="GO:0022625">
    <property type="term" value="C:cytosolic large ribosomal subunit"/>
    <property type="evidence" value="ECO:0007669"/>
    <property type="project" value="TreeGrafter"/>
</dbReference>
<dbReference type="GO" id="GO:0019843">
    <property type="term" value="F:rRNA binding"/>
    <property type="evidence" value="ECO:0007669"/>
    <property type="project" value="UniProtKB-UniRule"/>
</dbReference>
<dbReference type="GO" id="GO:0003735">
    <property type="term" value="F:structural constituent of ribosome"/>
    <property type="evidence" value="ECO:0007669"/>
    <property type="project" value="InterPro"/>
</dbReference>
<dbReference type="GO" id="GO:0002181">
    <property type="term" value="P:cytoplasmic translation"/>
    <property type="evidence" value="ECO:0007669"/>
    <property type="project" value="TreeGrafter"/>
</dbReference>
<dbReference type="FunFam" id="3.90.930.12:FF:000008">
    <property type="entry name" value="50S ribosomal protein L6"/>
    <property type="match status" value="1"/>
</dbReference>
<dbReference type="Gene3D" id="3.90.930.12">
    <property type="entry name" value="Ribosomal protein L6, alpha-beta domain"/>
    <property type="match status" value="2"/>
</dbReference>
<dbReference type="HAMAP" id="MF_01365_A">
    <property type="entry name" value="Ribosomal_uL6_A"/>
    <property type="match status" value="1"/>
</dbReference>
<dbReference type="InterPro" id="IPR000702">
    <property type="entry name" value="Ribosomal_uL6-like"/>
</dbReference>
<dbReference type="InterPro" id="IPR036789">
    <property type="entry name" value="Ribosomal_uL6-like_a/b-dom_sf"/>
</dbReference>
<dbReference type="InterPro" id="IPR020040">
    <property type="entry name" value="Ribosomal_uL6_a/b-dom"/>
</dbReference>
<dbReference type="InterPro" id="IPR019907">
    <property type="entry name" value="Ribosomal_uL6_arc"/>
</dbReference>
<dbReference type="InterPro" id="IPR002359">
    <property type="entry name" value="Ribosomal_uL6_CS2"/>
</dbReference>
<dbReference type="NCBIfam" id="NF004037">
    <property type="entry name" value="PRK05518.1"/>
    <property type="match status" value="1"/>
</dbReference>
<dbReference type="NCBIfam" id="TIGR03653">
    <property type="entry name" value="uL6_arch"/>
    <property type="match status" value="1"/>
</dbReference>
<dbReference type="PANTHER" id="PTHR11655:SF16">
    <property type="entry name" value="60S RIBOSOMAL PROTEIN L9"/>
    <property type="match status" value="1"/>
</dbReference>
<dbReference type="PANTHER" id="PTHR11655">
    <property type="entry name" value="60S/50S RIBOSOMAL PROTEIN L6/L9"/>
    <property type="match status" value="1"/>
</dbReference>
<dbReference type="Pfam" id="PF00347">
    <property type="entry name" value="Ribosomal_L6"/>
    <property type="match status" value="2"/>
</dbReference>
<dbReference type="PIRSF" id="PIRSF002162">
    <property type="entry name" value="Ribosomal_L6"/>
    <property type="match status" value="1"/>
</dbReference>
<dbReference type="SUPFAM" id="SSF56053">
    <property type="entry name" value="Ribosomal protein L6"/>
    <property type="match status" value="2"/>
</dbReference>
<dbReference type="PROSITE" id="PS00700">
    <property type="entry name" value="RIBOSOMAL_L6_2"/>
    <property type="match status" value="1"/>
</dbReference>
<sequence>MRENRGWEVFSLLTSTEVYEERVVEVPEDVQLTIEGDSFRGYTLKAVGPKGENTRYLKYRGVFIEVGDGKVRVYTTSPKKKHKAMVGTFAGHIENLITGVKEGFEYHLKVVYAHFPIKVRVEGNEVIIENFIGEKHPRRAKIVGRAQVEISGQDIYVRGIDIEECGQTAANLEQATKIKRKDPRVFQDGIYIVKKP</sequence>
<protein>
    <recommendedName>
        <fullName evidence="1">Large ribosomal subunit protein uL6</fullName>
    </recommendedName>
    <alternativeName>
        <fullName evidence="2">50S ribosomal protein L6</fullName>
    </alternativeName>
</protein>
<evidence type="ECO:0000255" key="1">
    <source>
        <dbReference type="HAMAP-Rule" id="MF_01365"/>
    </source>
</evidence>
<evidence type="ECO:0000305" key="2"/>
<organism>
    <name type="scientific">Archaeoglobus fulgidus (strain ATCC 49558 / DSM 4304 / JCM 9628 / NBRC 100126 / VC-16)</name>
    <dbReference type="NCBI Taxonomy" id="224325"/>
    <lineage>
        <taxon>Archaea</taxon>
        <taxon>Methanobacteriati</taxon>
        <taxon>Methanobacteriota</taxon>
        <taxon>Archaeoglobi</taxon>
        <taxon>Archaeoglobales</taxon>
        <taxon>Archaeoglobaceae</taxon>
        <taxon>Archaeoglobus</taxon>
    </lineage>
</organism>
<proteinExistence type="inferred from homology"/>